<dbReference type="EMBL" id="CP000546">
    <property type="protein sequence ID" value="ABN02709.1"/>
    <property type="molecule type" value="Genomic_DNA"/>
</dbReference>
<dbReference type="RefSeq" id="WP_004185219.1">
    <property type="nucleotide sequence ID" value="NC_008836.1"/>
</dbReference>
<dbReference type="SMR" id="A2S836"/>
<dbReference type="GeneID" id="92980950"/>
<dbReference type="KEGG" id="bml:BMA10229_A2141"/>
<dbReference type="HOGENOM" id="CLU_147249_0_2_4"/>
<dbReference type="Proteomes" id="UP000002283">
    <property type="component" value="Chromosome I"/>
</dbReference>
<dbReference type="GO" id="GO:0009425">
    <property type="term" value="C:bacterial-type flagellum basal body"/>
    <property type="evidence" value="ECO:0007669"/>
    <property type="project" value="UniProtKB-SubCell"/>
</dbReference>
<dbReference type="GO" id="GO:0003774">
    <property type="term" value="F:cytoskeletal motor activity"/>
    <property type="evidence" value="ECO:0007669"/>
    <property type="project" value="InterPro"/>
</dbReference>
<dbReference type="GO" id="GO:0005198">
    <property type="term" value="F:structural molecule activity"/>
    <property type="evidence" value="ECO:0007669"/>
    <property type="project" value="InterPro"/>
</dbReference>
<dbReference type="GO" id="GO:0071973">
    <property type="term" value="P:bacterial-type flagellum-dependent cell motility"/>
    <property type="evidence" value="ECO:0007669"/>
    <property type="project" value="InterPro"/>
</dbReference>
<dbReference type="HAMAP" id="MF_00724">
    <property type="entry name" value="FliE"/>
    <property type="match status" value="1"/>
</dbReference>
<dbReference type="InterPro" id="IPR001624">
    <property type="entry name" value="FliE"/>
</dbReference>
<dbReference type="NCBIfam" id="TIGR00205">
    <property type="entry name" value="fliE"/>
    <property type="match status" value="1"/>
</dbReference>
<dbReference type="PANTHER" id="PTHR34653">
    <property type="match status" value="1"/>
</dbReference>
<dbReference type="PANTHER" id="PTHR34653:SF1">
    <property type="entry name" value="FLAGELLAR HOOK-BASAL BODY COMPLEX PROTEIN FLIE"/>
    <property type="match status" value="1"/>
</dbReference>
<dbReference type="Pfam" id="PF02049">
    <property type="entry name" value="FliE"/>
    <property type="match status" value="1"/>
</dbReference>
<dbReference type="PRINTS" id="PR01006">
    <property type="entry name" value="FLGHOOKFLIE"/>
</dbReference>
<accession>A2S836</accession>
<reference key="1">
    <citation type="journal article" date="2010" name="Genome Biol. Evol.">
        <title>Continuing evolution of Burkholderia mallei through genome reduction and large-scale rearrangements.</title>
        <authorList>
            <person name="Losada L."/>
            <person name="Ronning C.M."/>
            <person name="DeShazer D."/>
            <person name="Woods D."/>
            <person name="Fedorova N."/>
            <person name="Kim H.S."/>
            <person name="Shabalina S.A."/>
            <person name="Pearson T.R."/>
            <person name="Brinkac L."/>
            <person name="Tan P."/>
            <person name="Nandi T."/>
            <person name="Crabtree J."/>
            <person name="Badger J."/>
            <person name="Beckstrom-Sternberg S."/>
            <person name="Saqib M."/>
            <person name="Schutzer S.E."/>
            <person name="Keim P."/>
            <person name="Nierman W.C."/>
        </authorList>
    </citation>
    <scope>NUCLEOTIDE SEQUENCE [LARGE SCALE GENOMIC DNA]</scope>
    <source>
        <strain>NCTC 10229</strain>
    </source>
</reference>
<keyword id="KW-0975">Bacterial flagellum</keyword>
<sequence>MVAPVNGIASALQQMQAMAAQAAGGASPATSLAGSGAASAGSFASAMKASLDKISGDQQKALGEAHAFEIGAQNVSLNDVMVDMQKANIGFQFGLQVRNKLVSAYNEIMQMSV</sequence>
<feature type="chain" id="PRO_1000045847" description="Flagellar hook-basal body complex protein FliE">
    <location>
        <begin position="1"/>
        <end position="113"/>
    </location>
</feature>
<comment type="subcellular location">
    <subcellularLocation>
        <location evidence="1">Bacterial flagellum basal body</location>
    </subcellularLocation>
</comment>
<comment type="similarity">
    <text evidence="1">Belongs to the FliE family.</text>
</comment>
<proteinExistence type="inferred from homology"/>
<protein>
    <recommendedName>
        <fullName evidence="1">Flagellar hook-basal body complex protein FliE</fullName>
    </recommendedName>
</protein>
<organism>
    <name type="scientific">Burkholderia mallei (strain NCTC 10229)</name>
    <dbReference type="NCBI Taxonomy" id="412022"/>
    <lineage>
        <taxon>Bacteria</taxon>
        <taxon>Pseudomonadati</taxon>
        <taxon>Pseudomonadota</taxon>
        <taxon>Betaproteobacteria</taxon>
        <taxon>Burkholderiales</taxon>
        <taxon>Burkholderiaceae</taxon>
        <taxon>Burkholderia</taxon>
        <taxon>pseudomallei group</taxon>
    </lineage>
</organism>
<evidence type="ECO:0000255" key="1">
    <source>
        <dbReference type="HAMAP-Rule" id="MF_00724"/>
    </source>
</evidence>
<gene>
    <name evidence="1" type="primary">fliE</name>
    <name type="ordered locus">BMA10229_A2141</name>
</gene>
<name>FLIE_BURM9</name>